<accession>Q03EC2</accession>
<gene>
    <name evidence="1" type="primary">rpsC</name>
    <name type="ordered locus">PEPE_1412</name>
</gene>
<keyword id="KW-0687">Ribonucleoprotein</keyword>
<keyword id="KW-0689">Ribosomal protein</keyword>
<keyword id="KW-0694">RNA-binding</keyword>
<keyword id="KW-0699">rRNA-binding</keyword>
<name>RS3_PEDPA</name>
<reference key="1">
    <citation type="journal article" date="2006" name="Proc. Natl. Acad. Sci. U.S.A.">
        <title>Comparative genomics of the lactic acid bacteria.</title>
        <authorList>
            <person name="Makarova K.S."/>
            <person name="Slesarev A."/>
            <person name="Wolf Y.I."/>
            <person name="Sorokin A."/>
            <person name="Mirkin B."/>
            <person name="Koonin E.V."/>
            <person name="Pavlov A."/>
            <person name="Pavlova N."/>
            <person name="Karamychev V."/>
            <person name="Polouchine N."/>
            <person name="Shakhova V."/>
            <person name="Grigoriev I."/>
            <person name="Lou Y."/>
            <person name="Rohksar D."/>
            <person name="Lucas S."/>
            <person name="Huang K."/>
            <person name="Goodstein D.M."/>
            <person name="Hawkins T."/>
            <person name="Plengvidhya V."/>
            <person name="Welker D."/>
            <person name="Hughes J."/>
            <person name="Goh Y."/>
            <person name="Benson A."/>
            <person name="Baldwin K."/>
            <person name="Lee J.-H."/>
            <person name="Diaz-Muniz I."/>
            <person name="Dosti B."/>
            <person name="Smeianov V."/>
            <person name="Wechter W."/>
            <person name="Barabote R."/>
            <person name="Lorca G."/>
            <person name="Altermann E."/>
            <person name="Barrangou R."/>
            <person name="Ganesan B."/>
            <person name="Xie Y."/>
            <person name="Rawsthorne H."/>
            <person name="Tamir D."/>
            <person name="Parker C."/>
            <person name="Breidt F."/>
            <person name="Broadbent J.R."/>
            <person name="Hutkins R."/>
            <person name="O'Sullivan D."/>
            <person name="Steele J."/>
            <person name="Unlu G."/>
            <person name="Saier M.H. Jr."/>
            <person name="Klaenhammer T."/>
            <person name="Richardson P."/>
            <person name="Kozyavkin S."/>
            <person name="Weimer B.C."/>
            <person name="Mills D.A."/>
        </authorList>
    </citation>
    <scope>NUCLEOTIDE SEQUENCE [LARGE SCALE GENOMIC DNA]</scope>
    <source>
        <strain>ATCC 25745 / CCUG 21536 / LMG 10740 / 183-1w</strain>
    </source>
</reference>
<organism>
    <name type="scientific">Pediococcus pentosaceus (strain ATCC 25745 / CCUG 21536 / LMG 10740 / 183-1w)</name>
    <dbReference type="NCBI Taxonomy" id="278197"/>
    <lineage>
        <taxon>Bacteria</taxon>
        <taxon>Bacillati</taxon>
        <taxon>Bacillota</taxon>
        <taxon>Bacilli</taxon>
        <taxon>Lactobacillales</taxon>
        <taxon>Lactobacillaceae</taxon>
        <taxon>Pediococcus</taxon>
    </lineage>
</organism>
<feature type="chain" id="PRO_0000293846" description="Small ribosomal subunit protein uS3">
    <location>
        <begin position="1"/>
        <end position="223"/>
    </location>
</feature>
<feature type="domain" description="KH type-2" evidence="1">
    <location>
        <begin position="38"/>
        <end position="106"/>
    </location>
</feature>
<sequence length="223" mass="24992">MGQKVNPNGFRVGVIRDWQAKWYADKDFSKFLAEDIKIREFIAKQLTDASVSTVEIERAANRVNISIHTAKPGMVIGKGGSEVEKLRNQLNQLTGKRVHINIVEIKKPDLEAKLVGENIAAQLEGRVAFRRAMKQAMQRSMRSGAKGIKTQVAGRLNGADMSRVERYSEGKVPLHTLRADVDYAWVEARTTYGQLGVKTWIYRGEILPEVKDAKKNSKEQGGK</sequence>
<protein>
    <recommendedName>
        <fullName evidence="1">Small ribosomal subunit protein uS3</fullName>
    </recommendedName>
    <alternativeName>
        <fullName evidence="2">30S ribosomal protein S3</fullName>
    </alternativeName>
</protein>
<dbReference type="EMBL" id="CP000422">
    <property type="protein sequence ID" value="ABJ68450.1"/>
    <property type="molecule type" value="Genomic_DNA"/>
</dbReference>
<dbReference type="RefSeq" id="WP_002833334.1">
    <property type="nucleotide sequence ID" value="NC_008525.1"/>
</dbReference>
<dbReference type="SMR" id="Q03EC2"/>
<dbReference type="STRING" id="278197.PEPE_1412"/>
<dbReference type="GeneID" id="33061353"/>
<dbReference type="KEGG" id="ppe:PEPE_1412"/>
<dbReference type="eggNOG" id="COG0092">
    <property type="taxonomic scope" value="Bacteria"/>
</dbReference>
<dbReference type="HOGENOM" id="CLU_058591_0_2_9"/>
<dbReference type="OrthoDB" id="9806396at2"/>
<dbReference type="Proteomes" id="UP000000773">
    <property type="component" value="Chromosome"/>
</dbReference>
<dbReference type="GO" id="GO:0022627">
    <property type="term" value="C:cytosolic small ribosomal subunit"/>
    <property type="evidence" value="ECO:0007669"/>
    <property type="project" value="TreeGrafter"/>
</dbReference>
<dbReference type="GO" id="GO:0003729">
    <property type="term" value="F:mRNA binding"/>
    <property type="evidence" value="ECO:0007669"/>
    <property type="project" value="UniProtKB-UniRule"/>
</dbReference>
<dbReference type="GO" id="GO:0019843">
    <property type="term" value="F:rRNA binding"/>
    <property type="evidence" value="ECO:0007669"/>
    <property type="project" value="UniProtKB-UniRule"/>
</dbReference>
<dbReference type="GO" id="GO:0003735">
    <property type="term" value="F:structural constituent of ribosome"/>
    <property type="evidence" value="ECO:0007669"/>
    <property type="project" value="InterPro"/>
</dbReference>
<dbReference type="GO" id="GO:0006412">
    <property type="term" value="P:translation"/>
    <property type="evidence" value="ECO:0007669"/>
    <property type="project" value="UniProtKB-UniRule"/>
</dbReference>
<dbReference type="CDD" id="cd02412">
    <property type="entry name" value="KH-II_30S_S3"/>
    <property type="match status" value="1"/>
</dbReference>
<dbReference type="FunFam" id="3.30.300.20:FF:000001">
    <property type="entry name" value="30S ribosomal protein S3"/>
    <property type="match status" value="1"/>
</dbReference>
<dbReference type="Gene3D" id="3.30.300.20">
    <property type="match status" value="1"/>
</dbReference>
<dbReference type="Gene3D" id="3.30.1140.32">
    <property type="entry name" value="Ribosomal protein S3, C-terminal domain"/>
    <property type="match status" value="1"/>
</dbReference>
<dbReference type="HAMAP" id="MF_01309_B">
    <property type="entry name" value="Ribosomal_uS3_B"/>
    <property type="match status" value="1"/>
</dbReference>
<dbReference type="InterPro" id="IPR004087">
    <property type="entry name" value="KH_dom"/>
</dbReference>
<dbReference type="InterPro" id="IPR015946">
    <property type="entry name" value="KH_dom-like_a/b"/>
</dbReference>
<dbReference type="InterPro" id="IPR004044">
    <property type="entry name" value="KH_dom_type_2"/>
</dbReference>
<dbReference type="InterPro" id="IPR009019">
    <property type="entry name" value="KH_sf_prok-type"/>
</dbReference>
<dbReference type="InterPro" id="IPR036419">
    <property type="entry name" value="Ribosomal_S3_C_sf"/>
</dbReference>
<dbReference type="InterPro" id="IPR005704">
    <property type="entry name" value="Ribosomal_uS3_bac-typ"/>
</dbReference>
<dbReference type="InterPro" id="IPR001351">
    <property type="entry name" value="Ribosomal_uS3_C"/>
</dbReference>
<dbReference type="InterPro" id="IPR018280">
    <property type="entry name" value="Ribosomal_uS3_CS"/>
</dbReference>
<dbReference type="NCBIfam" id="TIGR01009">
    <property type="entry name" value="rpsC_bact"/>
    <property type="match status" value="1"/>
</dbReference>
<dbReference type="PANTHER" id="PTHR11760">
    <property type="entry name" value="30S/40S RIBOSOMAL PROTEIN S3"/>
    <property type="match status" value="1"/>
</dbReference>
<dbReference type="PANTHER" id="PTHR11760:SF19">
    <property type="entry name" value="SMALL RIBOSOMAL SUBUNIT PROTEIN US3C"/>
    <property type="match status" value="1"/>
</dbReference>
<dbReference type="Pfam" id="PF07650">
    <property type="entry name" value="KH_2"/>
    <property type="match status" value="1"/>
</dbReference>
<dbReference type="Pfam" id="PF00189">
    <property type="entry name" value="Ribosomal_S3_C"/>
    <property type="match status" value="1"/>
</dbReference>
<dbReference type="SMART" id="SM00322">
    <property type="entry name" value="KH"/>
    <property type="match status" value="1"/>
</dbReference>
<dbReference type="SUPFAM" id="SSF54814">
    <property type="entry name" value="Prokaryotic type KH domain (KH-domain type II)"/>
    <property type="match status" value="1"/>
</dbReference>
<dbReference type="SUPFAM" id="SSF54821">
    <property type="entry name" value="Ribosomal protein S3 C-terminal domain"/>
    <property type="match status" value="1"/>
</dbReference>
<dbReference type="PROSITE" id="PS50823">
    <property type="entry name" value="KH_TYPE_2"/>
    <property type="match status" value="1"/>
</dbReference>
<dbReference type="PROSITE" id="PS00548">
    <property type="entry name" value="RIBOSOMAL_S3"/>
    <property type="match status" value="1"/>
</dbReference>
<proteinExistence type="inferred from homology"/>
<comment type="function">
    <text evidence="1">Binds the lower part of the 30S subunit head. Binds mRNA in the 70S ribosome, positioning it for translation.</text>
</comment>
<comment type="subunit">
    <text evidence="1">Part of the 30S ribosomal subunit. Forms a tight complex with proteins S10 and S14.</text>
</comment>
<comment type="similarity">
    <text evidence="1">Belongs to the universal ribosomal protein uS3 family.</text>
</comment>
<evidence type="ECO:0000255" key="1">
    <source>
        <dbReference type="HAMAP-Rule" id="MF_01309"/>
    </source>
</evidence>
<evidence type="ECO:0000305" key="2"/>